<dbReference type="EC" id="2.1.3.15" evidence="1"/>
<dbReference type="EMBL" id="AE004091">
    <property type="protein sequence ID" value="AAG07027.1"/>
    <property type="molecule type" value="Genomic_DNA"/>
</dbReference>
<dbReference type="PIR" id="D83192">
    <property type="entry name" value="D83192"/>
</dbReference>
<dbReference type="RefSeq" id="NP_252329.1">
    <property type="nucleotide sequence ID" value="NC_002516.2"/>
</dbReference>
<dbReference type="RefSeq" id="WP_003109333.1">
    <property type="nucleotide sequence ID" value="NZ_QZGE01000001.1"/>
</dbReference>
<dbReference type="SMR" id="Q9HXZ2"/>
<dbReference type="FunCoup" id="Q9HXZ2">
    <property type="interactions" value="645"/>
</dbReference>
<dbReference type="STRING" id="208964.PA3639"/>
<dbReference type="PaxDb" id="208964-PA3639"/>
<dbReference type="DNASU" id="880489"/>
<dbReference type="GeneID" id="77219880"/>
<dbReference type="GeneID" id="880489"/>
<dbReference type="KEGG" id="pae:PA3639"/>
<dbReference type="PATRIC" id="fig|208964.12.peg.3808"/>
<dbReference type="PseudoCAP" id="PA3639"/>
<dbReference type="HOGENOM" id="CLU_015486_0_2_6"/>
<dbReference type="InParanoid" id="Q9HXZ2"/>
<dbReference type="OrthoDB" id="9808023at2"/>
<dbReference type="PhylomeDB" id="Q9HXZ2"/>
<dbReference type="BioCyc" id="PAER208964:G1FZ6-3709-MONOMER"/>
<dbReference type="UniPathway" id="UPA00655">
    <property type="reaction ID" value="UER00711"/>
</dbReference>
<dbReference type="Proteomes" id="UP000002438">
    <property type="component" value="Chromosome"/>
</dbReference>
<dbReference type="GO" id="GO:0009317">
    <property type="term" value="C:acetyl-CoA carboxylase complex"/>
    <property type="evidence" value="ECO:0007669"/>
    <property type="project" value="InterPro"/>
</dbReference>
<dbReference type="GO" id="GO:0003989">
    <property type="term" value="F:acetyl-CoA carboxylase activity"/>
    <property type="evidence" value="ECO:0007669"/>
    <property type="project" value="InterPro"/>
</dbReference>
<dbReference type="GO" id="GO:0005524">
    <property type="term" value="F:ATP binding"/>
    <property type="evidence" value="ECO:0007669"/>
    <property type="project" value="UniProtKB-KW"/>
</dbReference>
<dbReference type="GO" id="GO:0016743">
    <property type="term" value="F:carboxyl- or carbamoyltransferase activity"/>
    <property type="evidence" value="ECO:0007669"/>
    <property type="project" value="UniProtKB-UniRule"/>
</dbReference>
<dbReference type="GO" id="GO:0006633">
    <property type="term" value="P:fatty acid biosynthetic process"/>
    <property type="evidence" value="ECO:0007669"/>
    <property type="project" value="UniProtKB-KW"/>
</dbReference>
<dbReference type="GO" id="GO:2001295">
    <property type="term" value="P:malonyl-CoA biosynthetic process"/>
    <property type="evidence" value="ECO:0007669"/>
    <property type="project" value="UniProtKB-UniRule"/>
</dbReference>
<dbReference type="FunFam" id="3.90.226.10:FF:000008">
    <property type="entry name" value="Acetyl-coenzyme A carboxylase carboxyl transferase subunit alpha"/>
    <property type="match status" value="1"/>
</dbReference>
<dbReference type="Gene3D" id="3.90.226.10">
    <property type="entry name" value="2-enoyl-CoA Hydratase, Chain A, domain 1"/>
    <property type="match status" value="1"/>
</dbReference>
<dbReference type="HAMAP" id="MF_00823">
    <property type="entry name" value="AcetylCoA_CT_alpha"/>
    <property type="match status" value="1"/>
</dbReference>
<dbReference type="InterPro" id="IPR001095">
    <property type="entry name" value="Acetyl_CoA_COase_a_su"/>
</dbReference>
<dbReference type="InterPro" id="IPR029045">
    <property type="entry name" value="ClpP/crotonase-like_dom_sf"/>
</dbReference>
<dbReference type="InterPro" id="IPR011763">
    <property type="entry name" value="COA_CT_C"/>
</dbReference>
<dbReference type="NCBIfam" id="TIGR00513">
    <property type="entry name" value="accA"/>
    <property type="match status" value="1"/>
</dbReference>
<dbReference type="NCBIfam" id="NF041504">
    <property type="entry name" value="AccA_sub"/>
    <property type="match status" value="1"/>
</dbReference>
<dbReference type="NCBIfam" id="NF004344">
    <property type="entry name" value="PRK05724.1"/>
    <property type="match status" value="1"/>
</dbReference>
<dbReference type="PANTHER" id="PTHR42853">
    <property type="entry name" value="ACETYL-COENZYME A CARBOXYLASE CARBOXYL TRANSFERASE SUBUNIT ALPHA"/>
    <property type="match status" value="1"/>
</dbReference>
<dbReference type="PANTHER" id="PTHR42853:SF3">
    <property type="entry name" value="ACETYL-COENZYME A CARBOXYLASE CARBOXYL TRANSFERASE SUBUNIT ALPHA, CHLOROPLASTIC"/>
    <property type="match status" value="1"/>
</dbReference>
<dbReference type="Pfam" id="PF03255">
    <property type="entry name" value="ACCA"/>
    <property type="match status" value="1"/>
</dbReference>
<dbReference type="PRINTS" id="PR01069">
    <property type="entry name" value="ACCCTRFRASEA"/>
</dbReference>
<dbReference type="SUPFAM" id="SSF52096">
    <property type="entry name" value="ClpP/crotonase"/>
    <property type="match status" value="1"/>
</dbReference>
<dbReference type="PROSITE" id="PS50989">
    <property type="entry name" value="COA_CT_CTER"/>
    <property type="match status" value="1"/>
</dbReference>
<gene>
    <name evidence="1" type="primary">accA</name>
    <name type="ordered locus">PA3639</name>
</gene>
<name>ACCA_PSEAE</name>
<accession>Q9HXZ2</accession>
<reference key="1">
    <citation type="journal article" date="2000" name="Nature">
        <title>Complete genome sequence of Pseudomonas aeruginosa PAO1, an opportunistic pathogen.</title>
        <authorList>
            <person name="Stover C.K."/>
            <person name="Pham X.-Q.T."/>
            <person name="Erwin A.L."/>
            <person name="Mizoguchi S.D."/>
            <person name="Warrener P."/>
            <person name="Hickey M.J."/>
            <person name="Brinkman F.S.L."/>
            <person name="Hufnagle W.O."/>
            <person name="Kowalik D.J."/>
            <person name="Lagrou M."/>
            <person name="Garber R.L."/>
            <person name="Goltry L."/>
            <person name="Tolentino E."/>
            <person name="Westbrock-Wadman S."/>
            <person name="Yuan Y."/>
            <person name="Brody L.L."/>
            <person name="Coulter S.N."/>
            <person name="Folger K.R."/>
            <person name="Kas A."/>
            <person name="Larbig K."/>
            <person name="Lim R.M."/>
            <person name="Smith K.A."/>
            <person name="Spencer D.H."/>
            <person name="Wong G.K.-S."/>
            <person name="Wu Z."/>
            <person name="Paulsen I.T."/>
            <person name="Reizer J."/>
            <person name="Saier M.H. Jr."/>
            <person name="Hancock R.E.W."/>
            <person name="Lory S."/>
            <person name="Olson M.V."/>
        </authorList>
    </citation>
    <scope>NUCLEOTIDE SEQUENCE [LARGE SCALE GENOMIC DNA]</scope>
    <source>
        <strain>ATCC 15692 / DSM 22644 / CIP 104116 / JCM 14847 / LMG 12228 / 1C / PRS 101 / PAO1</strain>
    </source>
</reference>
<reference key="2">
    <citation type="journal article" date="2004" name="J. Biol. Chem.">
        <title>Identification and characterization of the first class of potent bacterial acetyl-CoA carboxylase inhibitors with antibacterial activity.</title>
        <authorList>
            <person name="Freiberg C."/>
            <person name="Brunner N.A."/>
            <person name="Schiffer G."/>
            <person name="Lampe T."/>
            <person name="Pohlmann J."/>
            <person name="Brands M."/>
            <person name="Raabe M."/>
            <person name="Haebich D."/>
            <person name="Ziegelbauer K."/>
        </authorList>
    </citation>
    <scope>CHARACTERIZATION OF ACTIVITY REGULATION</scope>
    <source>
        <strain>ATCC 15692 / DSM 22644 / CIP 104116 / JCM 14847 / LMG 12228 / 1C / PRS 101 / PAO1</strain>
    </source>
</reference>
<feature type="chain" id="PRO_0000223806" description="Acetyl-coenzyme A carboxylase carboxyl transferase subunit alpha">
    <location>
        <begin position="1"/>
        <end position="316"/>
    </location>
</feature>
<feature type="domain" description="CoA carboxyltransferase C-terminal" evidence="2">
    <location>
        <begin position="39"/>
        <end position="293"/>
    </location>
</feature>
<proteinExistence type="evidence at protein level"/>
<keyword id="KW-0067">ATP-binding</keyword>
<keyword id="KW-0963">Cytoplasm</keyword>
<keyword id="KW-0275">Fatty acid biosynthesis</keyword>
<keyword id="KW-0276">Fatty acid metabolism</keyword>
<keyword id="KW-0444">Lipid biosynthesis</keyword>
<keyword id="KW-0443">Lipid metabolism</keyword>
<keyword id="KW-0547">Nucleotide-binding</keyword>
<keyword id="KW-1185">Reference proteome</keyword>
<keyword id="KW-0808">Transferase</keyword>
<organism>
    <name type="scientific">Pseudomonas aeruginosa (strain ATCC 15692 / DSM 22644 / CIP 104116 / JCM 14847 / LMG 12228 / 1C / PRS 101 / PAO1)</name>
    <dbReference type="NCBI Taxonomy" id="208964"/>
    <lineage>
        <taxon>Bacteria</taxon>
        <taxon>Pseudomonadati</taxon>
        <taxon>Pseudomonadota</taxon>
        <taxon>Gammaproteobacteria</taxon>
        <taxon>Pseudomonadales</taxon>
        <taxon>Pseudomonadaceae</taxon>
        <taxon>Pseudomonas</taxon>
    </lineage>
</organism>
<comment type="function">
    <text evidence="1">Component of the acetyl coenzyme A carboxylase (ACC) complex. First, biotin carboxylase catalyzes the carboxylation of biotin on its carrier protein (BCCP) and then the CO(2) group is transferred by the carboxyltransferase to acetyl-CoA to form malonyl-CoA.</text>
</comment>
<comment type="catalytic activity">
    <reaction evidence="1">
        <text>N(6)-carboxybiotinyl-L-lysyl-[protein] + acetyl-CoA = N(6)-biotinyl-L-lysyl-[protein] + malonyl-CoA</text>
        <dbReference type="Rhea" id="RHEA:54728"/>
        <dbReference type="Rhea" id="RHEA-COMP:10505"/>
        <dbReference type="Rhea" id="RHEA-COMP:10506"/>
        <dbReference type="ChEBI" id="CHEBI:57288"/>
        <dbReference type="ChEBI" id="CHEBI:57384"/>
        <dbReference type="ChEBI" id="CHEBI:83144"/>
        <dbReference type="ChEBI" id="CHEBI:83145"/>
        <dbReference type="EC" id="2.1.3.15"/>
    </reaction>
</comment>
<comment type="activity regulation">
    <text>Inhibited by pyrrolidine dione antibiotic moiramide B (CPD1); in vivo the effects are not seen unless the efflux MexAB-OprM system is inactive.</text>
</comment>
<comment type="pathway">
    <text evidence="1">Lipid metabolism; malonyl-CoA biosynthesis; malonyl-CoA from acetyl-CoA: step 1/1.</text>
</comment>
<comment type="subunit">
    <text evidence="1">Acetyl-CoA carboxylase is a heterohexamer composed of biotin carboxyl carrier protein (AccB), biotin carboxylase (AccC) and two subunits each of ACCase subunit alpha (AccA) and ACCase subunit beta (AccD).</text>
</comment>
<comment type="subcellular location">
    <subcellularLocation>
        <location evidence="1">Cytoplasm</location>
    </subcellularLocation>
</comment>
<comment type="similarity">
    <text evidence="1">Belongs to the AccA family.</text>
</comment>
<sequence length="316" mass="34947">MNPNFLDFEQPIADLQAKIEELRLVGNDNALNISDEISRLQDKSKALTENIFGNLSSWQIAQLARHPKRPYTLDYIGYLFSDFEELHGDRHFADDPAIVGGVARLDGSPVMVIGHQKGREVREKVRRNFGMPRPEGYRKACRLMEMAERFKMPILTFIDTPGAYPGIDAEERGQSEAIAWNLRVMARLKTPIIATVIGEGGSGGALAIGVCDQLNMLQYSTYSVISPEGCASILWKTAEKAPEAAEAMGITAERLKGLGIVDKVIDEPLGGAHRDPASMAESIRGELLAQLKMLQGLEMGELLERRYDRLMSYGAP</sequence>
<evidence type="ECO:0000255" key="1">
    <source>
        <dbReference type="HAMAP-Rule" id="MF_00823"/>
    </source>
</evidence>
<evidence type="ECO:0000255" key="2">
    <source>
        <dbReference type="PROSITE-ProRule" id="PRU01137"/>
    </source>
</evidence>
<protein>
    <recommendedName>
        <fullName evidence="1">Acetyl-coenzyme A carboxylase carboxyl transferase subunit alpha</fullName>
        <shortName evidence="1">ACCase subunit alpha</shortName>
        <shortName evidence="1">Acetyl-CoA carboxylase carboxyltransferase subunit alpha</shortName>
        <ecNumber evidence="1">2.1.3.15</ecNumber>
    </recommendedName>
</protein>